<organismHost>
    <name type="scientific">Homo sapiens</name>
    <name type="common">Human</name>
    <dbReference type="NCBI Taxonomy" id="9606"/>
</organismHost>
<comment type="function">
    <text evidence="1">Plays critical roles in virus replication, from virus entry and uncoating to assembly and budding of the virus particle. M1 binding to ribonucleocapsids (RNPs) in nucleus seems to inhibit viral transcription. Interaction of viral NEP with M1-RNP is thought to promote nuclear export of the complex, which is targeted to the virion assembly site at the apical plasma membrane in polarized epithelial cells. Interactions with NA and HA may bring M1, a non-raft-associated protein, into lipid rafts. Forms a continuous shell on the inner side of the lipid bilayer in virion, where it binds the RNP. During virus entry into cell, the M2 ion channel acidifies the internal virion core, inducing M1 dissociation from the RNP. M1-free RNPs are transported to the nucleus, where viral transcription and replication can take place.</text>
</comment>
<comment type="function">
    <text evidence="1">Determines the virion's shape: spherical or filamentous. Clinical isolates of influenza are characterized by the presence of significant proportion of filamentous virions, whereas after multiple passage on eggs or cell culture, virions have only spherical morphology. Filamentous virions are thought to be important to infect neighboring cells, and spherical virions more suited to spread through aerosol between hosts organisms.</text>
</comment>
<comment type="subunit">
    <text evidence="1">Homodimer and homomultimer. Interacts with NEP. Binds ribonucleocapsid by both interacting with genomic RNA and NP protein. May interact with HA and NA. Cannot bind NP without genomic RNA.</text>
</comment>
<comment type="subcellular location">
    <subcellularLocation>
        <location evidence="1">Virion membrane</location>
        <topology evidence="1">Peripheral membrane protein</topology>
        <orientation evidence="1">Cytoplasmic side</orientation>
    </subcellularLocation>
    <subcellularLocation>
        <location evidence="1">Host nucleus</location>
    </subcellularLocation>
</comment>
<comment type="miscellaneous">
    <text>Influenza B virus genome RNA segment 7 encodes the M1 and BM2 (AC P13882) proteins. Normal translation produces the M1 protein. The M1 termination codon overlaps the BM2 initiation codon in an overlapping stop-start pentanucleotide 5'-UAAUG-3'. Termination of M1 translation triggers reinitiation on the BM2 AUG in the +2 open reading frame.</text>
</comment>
<comment type="miscellaneous">
    <text evidence="1">Most abundant protein in virion. When expressed alone can form virus-like particles in transfected cells.</text>
</comment>
<comment type="similarity">
    <text evidence="1">Belongs to the influenza viruses Matrix protein M1 family.</text>
</comment>
<keyword id="KW-1048">Host nucleus</keyword>
<keyword id="KW-0472">Membrane</keyword>
<keyword id="KW-0694">RNA-binding</keyword>
<keyword id="KW-0468">Viral matrix protein</keyword>
<keyword id="KW-0946">Virion</keyword>
<sequence length="248" mass="27415">MSLFGDTIAYLLSLTEDGEGKAELAEKLHCWFGGKEFDLDSALEWIKNKRCLTDIQKALIGASICFLKPKDQERKRRFITEPLSGMGTTATKKKGLILAERKMRRCVSFHEAFEIAEGHESSALLYCLMVMYLNPGNYSMQVKLGTLCALCEKQASHSHRAHSRAARSSVPGVRREMQMVSAMNTAKTMNGMGKGEDVQKLAEELQSNIGVLRSLGASQKNGEGIAKDVMEVLKQSSMGNSALVKKYL</sequence>
<dbReference type="EMBL" id="M20176">
    <property type="protein sequence ID" value="AAA66416.1"/>
    <property type="molecule type" value="Genomic_RNA"/>
</dbReference>
<dbReference type="PIR" id="C30064">
    <property type="entry name" value="MFIVBW"/>
</dbReference>
<dbReference type="SMR" id="P13880"/>
<dbReference type="GO" id="GO:0042025">
    <property type="term" value="C:host cell nucleus"/>
    <property type="evidence" value="ECO:0007669"/>
    <property type="project" value="UniProtKB-SubCell"/>
</dbReference>
<dbReference type="GO" id="GO:0016020">
    <property type="term" value="C:membrane"/>
    <property type="evidence" value="ECO:0007669"/>
    <property type="project" value="UniProtKB-KW"/>
</dbReference>
<dbReference type="GO" id="GO:0055036">
    <property type="term" value="C:virion membrane"/>
    <property type="evidence" value="ECO:0007669"/>
    <property type="project" value="UniProtKB-SubCell"/>
</dbReference>
<dbReference type="GO" id="GO:0003723">
    <property type="term" value="F:RNA binding"/>
    <property type="evidence" value="ECO:0007669"/>
    <property type="project" value="UniProtKB-UniRule"/>
</dbReference>
<dbReference type="GO" id="GO:0039660">
    <property type="term" value="F:structural constituent of virion"/>
    <property type="evidence" value="ECO:0007669"/>
    <property type="project" value="UniProtKB-UniRule"/>
</dbReference>
<dbReference type="GO" id="GO:0046761">
    <property type="term" value="P:viral budding from plasma membrane"/>
    <property type="evidence" value="ECO:0007669"/>
    <property type="project" value="UniProtKB-UniRule"/>
</dbReference>
<dbReference type="Gene3D" id="1.10.10.180">
    <property type="match status" value="1"/>
</dbReference>
<dbReference type="Gene3D" id="1.20.91.10">
    <property type="match status" value="1"/>
</dbReference>
<dbReference type="HAMAP" id="MF_04068">
    <property type="entry name" value="INFV_M1"/>
    <property type="match status" value="1"/>
</dbReference>
<dbReference type="InterPro" id="IPR036039">
    <property type="entry name" value="Flu_matrix_M1"/>
</dbReference>
<dbReference type="InterPro" id="IPR013188">
    <property type="entry name" value="Flu_matrix_M1_C"/>
</dbReference>
<dbReference type="InterPro" id="IPR001561">
    <property type="entry name" value="Flu_matrix_M1_N"/>
</dbReference>
<dbReference type="InterPro" id="IPR015423">
    <property type="entry name" value="Flu_matrix_M1_N_sub1"/>
</dbReference>
<dbReference type="InterPro" id="IPR015799">
    <property type="entry name" value="Flu_matrix_M1_N_sub2"/>
</dbReference>
<dbReference type="InterPro" id="IPR037533">
    <property type="entry name" value="INFV_M1"/>
</dbReference>
<dbReference type="Pfam" id="PF00598">
    <property type="entry name" value="Flu_M1"/>
    <property type="match status" value="1"/>
</dbReference>
<dbReference type="Pfam" id="PF08289">
    <property type="entry name" value="Flu_M1_C"/>
    <property type="match status" value="1"/>
</dbReference>
<dbReference type="SMART" id="SM00759">
    <property type="entry name" value="Flu_M1_C"/>
    <property type="match status" value="1"/>
</dbReference>
<dbReference type="SUPFAM" id="SSF48145">
    <property type="entry name" value="Influenza virus matrix protein M1"/>
    <property type="match status" value="1"/>
</dbReference>
<accession>P13880</accession>
<protein>
    <recommendedName>
        <fullName evidence="1">Matrix protein 1</fullName>
        <shortName evidence="1">M1</shortName>
    </recommendedName>
</protein>
<feature type="chain" id="PRO_0000078871" description="Matrix protein 1">
    <location>
        <begin position="1"/>
        <end position="248"/>
    </location>
</feature>
<feature type="region of interest" description="Membrane-binding" evidence="1">
    <location>
        <begin position="1"/>
        <end position="164"/>
    </location>
</feature>
<feature type="region of interest" description="RNP-binding" evidence="1">
    <location>
        <begin position="165"/>
        <end position="248"/>
    </location>
</feature>
<feature type="short sequence motif" description="Nuclear localization signal" evidence="1">
    <location>
        <begin position="101"/>
        <end position="105"/>
    </location>
</feature>
<evidence type="ECO:0000255" key="1">
    <source>
        <dbReference type="HAMAP-Rule" id="MF_04068"/>
    </source>
</evidence>
<name>M1_INBAD</name>
<reference key="1">
    <citation type="journal article" date="1988" name="Virology">
        <title>Sequence comparison of wild-type and cold-adapted B/Ann Arbor/1/66 influenza virus genes.</title>
        <authorList>
            <person name="Deborde D.C."/>
            <person name="Donabedian A.M."/>
            <person name="Herlocher M.L."/>
            <person name="Naeve C.W."/>
            <person name="Maassab H.F."/>
        </authorList>
    </citation>
    <scope>NUCLEOTIDE SEQUENCE [GENOMIC RNA]</scope>
</reference>
<gene>
    <name evidence="1" type="primary">M</name>
</gene>
<proteinExistence type="inferred from homology"/>
<organism>
    <name type="scientific">Influenza B virus (strain B/Ann Arbor/1/1966 [wild-type])</name>
    <dbReference type="NCBI Taxonomy" id="11523"/>
    <lineage>
        <taxon>Viruses</taxon>
        <taxon>Riboviria</taxon>
        <taxon>Orthornavirae</taxon>
        <taxon>Negarnaviricota</taxon>
        <taxon>Polyploviricotina</taxon>
        <taxon>Insthoviricetes</taxon>
        <taxon>Articulavirales</taxon>
        <taxon>Orthomyxoviridae</taxon>
        <taxon>Betainfluenzavirus</taxon>
        <taxon>Betainfluenzavirus influenzae</taxon>
        <taxon>Influenza B virus</taxon>
    </lineage>
</organism>